<reference key="1">
    <citation type="submission" date="2006-09" db="EMBL/GenBank/DDBJ databases">
        <authorList>
            <consortium name="The Klebsiella pneumonia Genome Sequencing Project"/>
            <person name="McClelland M."/>
            <person name="Sanderson E.K."/>
            <person name="Spieth J."/>
            <person name="Clifton W.S."/>
            <person name="Latreille P."/>
            <person name="Sabo A."/>
            <person name="Pepin K."/>
            <person name="Bhonagiri V."/>
            <person name="Porwollik S."/>
            <person name="Ali J."/>
            <person name="Wilson R.K."/>
        </authorList>
    </citation>
    <scope>NUCLEOTIDE SEQUENCE [LARGE SCALE GENOMIC DNA]</scope>
    <source>
        <strain>ATCC 700721 / MGH 78578</strain>
    </source>
</reference>
<comment type="function">
    <text evidence="1">May function as a transcriptional regulator that controls feoABC expression.</text>
</comment>
<comment type="similarity">
    <text evidence="1">Belongs to the FeoC family.</text>
</comment>
<comment type="sequence caution" evidence="2">
    <conflict type="erroneous initiation">
        <sequence resource="EMBL-CDS" id="ABR79167"/>
    </conflict>
</comment>
<dbReference type="EMBL" id="CP000647">
    <property type="protein sequence ID" value="ABR79167.1"/>
    <property type="status" value="ALT_INIT"/>
    <property type="molecule type" value="Genomic_DNA"/>
</dbReference>
<dbReference type="RefSeq" id="WP_002920509.1">
    <property type="nucleotide sequence ID" value="NC_009648.1"/>
</dbReference>
<dbReference type="PDB" id="2K02">
    <property type="method" value="NMR"/>
    <property type="chains" value="A=1-79"/>
</dbReference>
<dbReference type="PDBsum" id="2K02"/>
<dbReference type="BMRB" id="A6TF33"/>
<dbReference type="SMR" id="A6TF33"/>
<dbReference type="STRING" id="272620.KPN_03780"/>
<dbReference type="PaxDb" id="272620-KPN_03780"/>
<dbReference type="EnsemblBacteria" id="ABR79167">
    <property type="protein sequence ID" value="ABR79167"/>
    <property type="gene ID" value="KPN_03780"/>
</dbReference>
<dbReference type="KEGG" id="kpn:KPN_03780"/>
<dbReference type="HOGENOM" id="CLU_189182_0_0_6"/>
<dbReference type="EvolutionaryTrace" id="A6TF33"/>
<dbReference type="Proteomes" id="UP000000265">
    <property type="component" value="Chromosome"/>
</dbReference>
<dbReference type="GO" id="GO:0003677">
    <property type="term" value="F:DNA binding"/>
    <property type="evidence" value="ECO:0007669"/>
    <property type="project" value="UniProtKB-KW"/>
</dbReference>
<dbReference type="GO" id="GO:0005506">
    <property type="term" value="F:iron ion binding"/>
    <property type="evidence" value="ECO:0007669"/>
    <property type="project" value="UniProtKB-UniRule"/>
</dbReference>
<dbReference type="GO" id="GO:0051536">
    <property type="term" value="F:iron-sulfur cluster binding"/>
    <property type="evidence" value="ECO:0007669"/>
    <property type="project" value="UniProtKB-KW"/>
</dbReference>
<dbReference type="Gene3D" id="1.10.10.10">
    <property type="entry name" value="Winged helix-like DNA-binding domain superfamily/Winged helix DNA-binding domain"/>
    <property type="match status" value="1"/>
</dbReference>
<dbReference type="HAMAP" id="MF_01586">
    <property type="entry name" value="FeoC"/>
    <property type="match status" value="1"/>
</dbReference>
<dbReference type="InterPro" id="IPR023732">
    <property type="entry name" value="FeoC"/>
</dbReference>
<dbReference type="InterPro" id="IPR015102">
    <property type="entry name" value="Tscrpt_reg_HTH_FeoC"/>
</dbReference>
<dbReference type="InterPro" id="IPR036388">
    <property type="entry name" value="WH-like_DNA-bd_sf"/>
</dbReference>
<dbReference type="InterPro" id="IPR036390">
    <property type="entry name" value="WH_DNA-bd_sf"/>
</dbReference>
<dbReference type="NCBIfam" id="NF011960">
    <property type="entry name" value="PRK15431.1"/>
    <property type="match status" value="1"/>
</dbReference>
<dbReference type="Pfam" id="PF09012">
    <property type="entry name" value="FeoC"/>
    <property type="match status" value="1"/>
</dbReference>
<dbReference type="SUPFAM" id="SSF46785">
    <property type="entry name" value="Winged helix' DNA-binding domain"/>
    <property type="match status" value="1"/>
</dbReference>
<accession>A6TF33</accession>
<protein>
    <recommendedName>
        <fullName evidence="1">Probable [Fe-S]-dependent transcriptional repressor</fullName>
    </recommendedName>
</protein>
<proteinExistence type="evidence at protein level"/>
<gene>
    <name evidence="1" type="primary">feoC</name>
    <name type="ordered locus">KPN78578_37430</name>
    <name type="ORF">KPN_03780</name>
</gene>
<keyword id="KW-0002">3D-structure</keyword>
<keyword id="KW-0238">DNA-binding</keyword>
<keyword id="KW-0408">Iron</keyword>
<keyword id="KW-0411">Iron-sulfur</keyword>
<keyword id="KW-0479">Metal-binding</keyword>
<keyword id="KW-0678">Repressor</keyword>
<keyword id="KW-0804">Transcription</keyword>
<keyword id="KW-0805">Transcription regulation</keyword>
<name>FEOC_KLEP7</name>
<sequence length="79" mass="8801">MASLMEVRDMLALQGRMEAKQLSARLQTPQPLIDAMLERMEAMGKVVRISETSEGCLSGSCKSCPEGKAACRQEWWALR</sequence>
<organism>
    <name type="scientific">Klebsiella pneumoniae subsp. pneumoniae (strain ATCC 700721 / MGH 78578)</name>
    <dbReference type="NCBI Taxonomy" id="272620"/>
    <lineage>
        <taxon>Bacteria</taxon>
        <taxon>Pseudomonadati</taxon>
        <taxon>Pseudomonadota</taxon>
        <taxon>Gammaproteobacteria</taxon>
        <taxon>Enterobacterales</taxon>
        <taxon>Enterobacteriaceae</taxon>
        <taxon>Klebsiella/Raoultella group</taxon>
        <taxon>Klebsiella</taxon>
        <taxon>Klebsiella pneumoniae complex</taxon>
    </lineage>
</organism>
<evidence type="ECO:0000255" key="1">
    <source>
        <dbReference type="HAMAP-Rule" id="MF_01586"/>
    </source>
</evidence>
<evidence type="ECO:0000305" key="2"/>
<evidence type="ECO:0007829" key="3">
    <source>
        <dbReference type="PDB" id="2K02"/>
    </source>
</evidence>
<feature type="chain" id="PRO_0000313061" description="Probable [Fe-S]-dependent transcriptional repressor">
    <location>
        <begin position="1"/>
        <end position="79"/>
    </location>
</feature>
<feature type="binding site" evidence="1">
    <location>
        <position position="56"/>
    </location>
    <ligand>
        <name>iron-sulfur cluster</name>
        <dbReference type="ChEBI" id="CHEBI:30408"/>
    </ligand>
</feature>
<feature type="binding site" evidence="1">
    <location>
        <position position="61"/>
    </location>
    <ligand>
        <name>iron-sulfur cluster</name>
        <dbReference type="ChEBI" id="CHEBI:30408"/>
    </ligand>
</feature>
<feature type="binding site" evidence="1">
    <location>
        <position position="64"/>
    </location>
    <ligand>
        <name>iron-sulfur cluster</name>
        <dbReference type="ChEBI" id="CHEBI:30408"/>
    </ligand>
</feature>
<feature type="binding site" evidence="1">
    <location>
        <position position="71"/>
    </location>
    <ligand>
        <name>iron-sulfur cluster</name>
        <dbReference type="ChEBI" id="CHEBI:30408"/>
    </ligand>
</feature>
<feature type="helix" evidence="3">
    <location>
        <begin position="5"/>
        <end position="13"/>
    </location>
</feature>
<feature type="strand" evidence="3">
    <location>
        <begin position="16"/>
        <end position="18"/>
    </location>
</feature>
<feature type="helix" evidence="3">
    <location>
        <begin position="19"/>
        <end position="25"/>
    </location>
</feature>
<feature type="helix" evidence="3">
    <location>
        <begin position="30"/>
        <end position="41"/>
    </location>
</feature>
<feature type="strand" evidence="3">
    <location>
        <begin position="46"/>
        <end position="52"/>
    </location>
</feature>
<feature type="strand" evidence="3">
    <location>
        <begin position="58"/>
        <end position="63"/>
    </location>
</feature>
<feature type="strand" evidence="3">
    <location>
        <begin position="70"/>
        <end position="77"/>
    </location>
</feature>